<feature type="chain" id="PRO_0000238944" description="Potassium channel regulatory protein">
    <location>
        <begin position="1"/>
        <end position="267"/>
    </location>
</feature>
<feature type="domain" description="BTB">
    <location>
        <begin position="5"/>
        <end position="74"/>
    </location>
</feature>
<keyword id="KW-0256">Endoplasmic reticulum</keyword>
<keyword id="KW-1185">Reference proteome</keyword>
<reference key="1">
    <citation type="submission" date="2002-12" db="EMBL/GenBank/DDBJ databases">
        <title>Cloning of a bovine CLLD4 related cDNA.</title>
        <authorList>
            <person name="Skoldberg F."/>
            <person name="Alimohammadi M."/>
            <person name="Hedstrand H."/>
            <person name="Kampe O."/>
        </authorList>
    </citation>
    <scope>NUCLEOTIDE SEQUENCE [MRNA]</scope>
    <source>
        <tissue>Parathyroid</tissue>
    </source>
</reference>
<name>KCNRG_BOVIN</name>
<comment type="function">
    <text evidence="1">Inhibits potassium fluxes in cells. May regulate Kv1 family channel proteins by retaining a fraction of channels in endomembranes (By similarity).</text>
</comment>
<comment type="subunit">
    <text evidence="1">Can form homooligomers. Interacts with KCNA1 (via cytoplasmic N-terminal domain) and KCNA4.</text>
</comment>
<comment type="subcellular location">
    <subcellularLocation>
        <location evidence="1">Endoplasmic reticulum</location>
    </subcellularLocation>
</comment>
<organism>
    <name type="scientific">Bos taurus</name>
    <name type="common">Bovine</name>
    <dbReference type="NCBI Taxonomy" id="9913"/>
    <lineage>
        <taxon>Eukaryota</taxon>
        <taxon>Metazoa</taxon>
        <taxon>Chordata</taxon>
        <taxon>Craniata</taxon>
        <taxon>Vertebrata</taxon>
        <taxon>Euteleostomi</taxon>
        <taxon>Mammalia</taxon>
        <taxon>Eutheria</taxon>
        <taxon>Laurasiatheria</taxon>
        <taxon>Artiodactyla</taxon>
        <taxon>Ruminantia</taxon>
        <taxon>Pecora</taxon>
        <taxon>Bovidae</taxon>
        <taxon>Bovinae</taxon>
        <taxon>Bos</taxon>
    </lineage>
</organism>
<sequence length="267" mass="30370">MSGQELVTLNVGGKVFTTRSSTLQQFPGSRLMRMLDGRDKEFKMVDGQIFVDRDGVLFSFILDFLRTQQLLLPTDFSDHLRLQREALFYELNPLVDLLNQEHKLQPRPALVEVHFLSRNTQAFFRVFGSCSKTIEMLTGRITVFIEQPSAPASSSNSFPQMTLLPLPPQRPSYHDLVFQCGSDSTTDNQTRIRYISIKPDNRKLANGTNVLGLLIDTLLMEGFHLVGTRTVSSEDRTECYSFERIKKPDALAMNKTLKSETTLMPEQ</sequence>
<accession>Q863D4</accession>
<dbReference type="EMBL" id="AY190923">
    <property type="protein sequence ID" value="AAO27466.1"/>
    <property type="molecule type" value="mRNA"/>
</dbReference>
<dbReference type="RefSeq" id="NP_991377.1">
    <property type="nucleotide sequence ID" value="NM_205808.1"/>
</dbReference>
<dbReference type="SMR" id="Q863D4"/>
<dbReference type="FunCoup" id="Q863D4">
    <property type="interactions" value="10"/>
</dbReference>
<dbReference type="STRING" id="9913.ENSBTAP00000010748"/>
<dbReference type="PaxDb" id="9913-ENSBTAP00000010748"/>
<dbReference type="Ensembl" id="ENSBTAT00000010748.3">
    <property type="protein sequence ID" value="ENSBTAP00000010748.2"/>
    <property type="gene ID" value="ENSBTAG00000008176.3"/>
</dbReference>
<dbReference type="GeneID" id="404166"/>
<dbReference type="KEGG" id="bta:404166"/>
<dbReference type="CTD" id="283518"/>
<dbReference type="VEuPathDB" id="HostDB:ENSBTAG00000008176"/>
<dbReference type="VGNC" id="VGNC:30490">
    <property type="gene designation" value="KCNRG"/>
</dbReference>
<dbReference type="eggNOG" id="KOG2723">
    <property type="taxonomic scope" value="Eukaryota"/>
</dbReference>
<dbReference type="GeneTree" id="ENSGT00940000161898"/>
<dbReference type="HOGENOM" id="CLU_087954_0_0_1"/>
<dbReference type="InParanoid" id="Q863D4"/>
<dbReference type="OMA" id="SYIMDFL"/>
<dbReference type="OrthoDB" id="10025005at2759"/>
<dbReference type="TreeFam" id="TF315332"/>
<dbReference type="Proteomes" id="UP000009136">
    <property type="component" value="Chromosome 12"/>
</dbReference>
<dbReference type="Bgee" id="ENSBTAG00000008176">
    <property type="expression patterns" value="Expressed in oviduct epithelium and 61 other cell types or tissues"/>
</dbReference>
<dbReference type="GO" id="GO:0005783">
    <property type="term" value="C:endoplasmic reticulum"/>
    <property type="evidence" value="ECO:0000250"/>
    <property type="project" value="UniProtKB"/>
</dbReference>
<dbReference type="GO" id="GO:0042802">
    <property type="term" value="F:identical protein binding"/>
    <property type="evidence" value="ECO:0007669"/>
    <property type="project" value="Ensembl"/>
</dbReference>
<dbReference type="GO" id="GO:1902260">
    <property type="term" value="P:negative regulation of delayed rectifier potassium channel activity"/>
    <property type="evidence" value="ECO:0000250"/>
    <property type="project" value="UniProtKB"/>
</dbReference>
<dbReference type="GO" id="GO:0051260">
    <property type="term" value="P:protein homooligomerization"/>
    <property type="evidence" value="ECO:0007669"/>
    <property type="project" value="InterPro"/>
</dbReference>
<dbReference type="FunFam" id="3.30.710.10:FF:000114">
    <property type="entry name" value="potassium channel regulatory protein"/>
    <property type="match status" value="1"/>
</dbReference>
<dbReference type="Gene3D" id="3.30.710.10">
    <property type="entry name" value="Potassium Channel Kv1.1, Chain A"/>
    <property type="match status" value="1"/>
</dbReference>
<dbReference type="InterPro" id="IPR000210">
    <property type="entry name" value="BTB/POZ_dom"/>
</dbReference>
<dbReference type="InterPro" id="IPR011333">
    <property type="entry name" value="SKP1/BTB/POZ_sf"/>
</dbReference>
<dbReference type="InterPro" id="IPR003131">
    <property type="entry name" value="T1-type_BTB"/>
</dbReference>
<dbReference type="PANTHER" id="PTHR14499:SF5">
    <property type="entry name" value="POTASSIUM CHANNEL REGULATORY PROTEIN"/>
    <property type="match status" value="1"/>
</dbReference>
<dbReference type="PANTHER" id="PTHR14499">
    <property type="entry name" value="POTASSIUM CHANNEL TETRAMERIZATION DOMAIN-CONTAINING"/>
    <property type="match status" value="1"/>
</dbReference>
<dbReference type="Pfam" id="PF02214">
    <property type="entry name" value="BTB_2"/>
    <property type="match status" value="1"/>
</dbReference>
<dbReference type="SMART" id="SM00225">
    <property type="entry name" value="BTB"/>
    <property type="match status" value="1"/>
</dbReference>
<dbReference type="SUPFAM" id="SSF54695">
    <property type="entry name" value="POZ domain"/>
    <property type="match status" value="1"/>
</dbReference>
<proteinExistence type="evidence at transcript level"/>
<protein>
    <recommendedName>
        <fullName>Potassium channel regulatory protein</fullName>
        <shortName>Potassium channel regulator</shortName>
    </recommendedName>
    <alternativeName>
        <fullName>Protein CLLD4</fullName>
    </alternativeName>
</protein>
<gene>
    <name type="primary">KCNRG</name>
    <name type="synonym">CLLD4</name>
</gene>
<evidence type="ECO:0000250" key="1">
    <source>
        <dbReference type="UniProtKB" id="Q8N5I3"/>
    </source>
</evidence>